<comment type="function">
    <text evidence="8 9">E3 ubiquitin-protein ligase that mediates ubiquitination and subsequent proteasomal degradation of target proteins (PubMed:32786047). E3 ubiquitin ligases accept ubiquitin from an E2 ubiquitin-conjugating enzyme in the form of a thioester and then directly transfers the ubiquitin to targeted substrates (PubMed:32786047). It probably triggers the ubiquitin-mediated degradation of different substrates (PubMed:32786047). Modulates directly the ubiquitination and proteasomal-dependent degradation of FREE1, a component of the ESCRT-I complex (PubMed:32753431, PubMed:32786047). Modulates directly the ubiquitination and proteasomal-dependent degradation of ELC/VPS23A, a component of the ESCRT-I complex (PubMed:32753431).</text>
</comment>
<comment type="catalytic activity">
    <reaction evidence="9">
        <text>S-ubiquitinyl-[E2 ubiquitin-conjugating enzyme]-L-cysteine + [acceptor protein]-L-lysine = [E2 ubiquitin-conjugating enzyme]-L-cysteine + N(6)-ubiquitinyl-[acceptor protein]-L-lysine.</text>
        <dbReference type="EC" id="2.3.2.27"/>
    </reaction>
</comment>
<comment type="pathway">
    <text evidence="11">Protein modification; protein ubiquitination.</text>
</comment>
<comment type="subunit">
    <text evidence="6 7 8 9">Interacts with SINAT6 (PubMed:24350984). Interacts with WAV3 (PubMed:22122664). Interacts with FREE1 (PubMed:32753431, PubMed:32786047). Interacts with ELC/VPS23A (PubMed:32753431).</text>
</comment>
<comment type="subcellular location">
    <subcellularLocation>
        <location evidence="8 9">Endosome</location>
        <location evidence="8 9">Multivesicular body</location>
    </subcellularLocation>
    <subcellularLocation>
        <location evidence="8">Cytoplasmic vesicle</location>
        <location evidence="8">Autophagosome</location>
    </subcellularLocation>
</comment>
<comment type="induction">
    <text evidence="7">Induced by drought stress, salt stress, osmotic shock and abscisic acid (ABA).</text>
</comment>
<comment type="domain">
    <text evidence="2">The RING-type zinc finger domain is essential for ubiquitin ligase activity.</text>
</comment>
<comment type="domain">
    <text evidence="2">The SBD domain (substrate-binding domain) mediates the homodimerization and the interaction with substrate proteins. It is related to the TRAF family.</text>
</comment>
<comment type="similarity">
    <text evidence="11">Belongs to the SINA (Seven in absentia) family.</text>
</comment>
<gene>
    <name evidence="10" type="primary">SINAT4</name>
    <name type="ordered locus">At4g27880</name>
    <name type="ORF">T27E11.120</name>
</gene>
<keyword id="KW-0968">Cytoplasmic vesicle</keyword>
<keyword id="KW-0967">Endosome</keyword>
<keyword id="KW-0479">Metal-binding</keyword>
<keyword id="KW-1185">Reference proteome</keyword>
<keyword id="KW-0808">Transferase</keyword>
<keyword id="KW-0833">Ubl conjugation pathway</keyword>
<keyword id="KW-0862">Zinc</keyword>
<keyword id="KW-0863">Zinc-finger</keyword>
<sequence length="327" mass="36574">METDSMECVSSTGNEIHQNGNGHQSYQFSSTKTHGGAAAAAVVTNIVGPTATAPATSVYELLECPVCTYSMYPPIHQCHNGHTLCSTCKVRVHNRCPTCRQELGDIRCLALEKVAESLELPCKFYNLGCPEIFPYYSKLKHESLCNFRPYSCPYAGSECGIVGDIPFLVAHLRDDHKVDMHAGSTFNHRYVKSNPREVENATWMLTVFHCFGQYFCLHFEAFQLGMGPVYMAFLRFMGDEEDARSYSYSLEVGGSGRKLTWEGTPRSIRDSHRKVRDSNDGLIIQRNMALFFSGGDRKELKLRVTGKIWKEQHSPDSGLSIPNLSSS</sequence>
<feature type="chain" id="PRO_0000056183" description="E3 ubiquitin-protein ligase SINAT4">
    <location>
        <begin position="1"/>
        <end position="327"/>
    </location>
</feature>
<feature type="zinc finger region" description="RING-type" evidence="3">
    <location>
        <begin position="64"/>
        <end position="100"/>
    </location>
</feature>
<feature type="zinc finger region" description="SIAH-type" evidence="4">
    <location>
        <begin position="117"/>
        <end position="177"/>
    </location>
</feature>
<feature type="region of interest" description="Disordered" evidence="5">
    <location>
        <begin position="1"/>
        <end position="27"/>
    </location>
</feature>
<feature type="region of interest" description="SBD">
    <location>
        <begin position="114"/>
        <end position="307"/>
    </location>
</feature>
<feature type="compositionally biased region" description="Polar residues" evidence="5">
    <location>
        <begin position="8"/>
        <end position="27"/>
    </location>
</feature>
<feature type="binding site" evidence="1">
    <location>
        <position position="122"/>
    </location>
    <ligand>
        <name>Zn(2+)</name>
        <dbReference type="ChEBI" id="CHEBI:29105"/>
        <label>1</label>
    </ligand>
</feature>
<feature type="binding site" evidence="1">
    <location>
        <position position="129"/>
    </location>
    <ligand>
        <name>Zn(2+)</name>
        <dbReference type="ChEBI" id="CHEBI:29105"/>
        <label>1</label>
    </ligand>
</feature>
<feature type="binding site" evidence="1">
    <location>
        <position position="141"/>
    </location>
    <ligand>
        <name>Zn(2+)</name>
        <dbReference type="ChEBI" id="CHEBI:29105"/>
        <label>1</label>
    </ligand>
</feature>
<feature type="binding site" evidence="1">
    <location>
        <position position="145"/>
    </location>
    <ligand>
        <name>Zn(2+)</name>
        <dbReference type="ChEBI" id="CHEBI:29105"/>
        <label>1</label>
    </ligand>
</feature>
<feature type="binding site" evidence="1">
    <location>
        <position position="152"/>
    </location>
    <ligand>
        <name>Zn(2+)</name>
        <dbReference type="ChEBI" id="CHEBI:29105"/>
        <label>2</label>
    </ligand>
</feature>
<feature type="binding site" evidence="1">
    <location>
        <position position="159"/>
    </location>
    <ligand>
        <name>Zn(2+)</name>
        <dbReference type="ChEBI" id="CHEBI:29105"/>
        <label>2</label>
    </ligand>
</feature>
<feature type="binding site" evidence="1">
    <location>
        <position position="171"/>
    </location>
    <ligand>
        <name>Zn(2+)</name>
        <dbReference type="ChEBI" id="CHEBI:29105"/>
        <label>2</label>
    </ligand>
</feature>
<feature type="binding site" evidence="1">
    <location>
        <position position="176"/>
    </location>
    <ligand>
        <name>Zn(2+)</name>
        <dbReference type="ChEBI" id="CHEBI:29105"/>
        <label>2</label>
    </ligand>
</feature>
<feature type="mutagenesis site" description="Loss of ubiquitin ligase activity." evidence="9">
    <original>H</original>
    <variation>Y</variation>
    <location>
        <position position="82"/>
    </location>
</feature>
<feature type="sequence conflict" description="In Ref. 3; BX826742." evidence="11" ref="3">
    <original>P</original>
    <variation>L</variation>
    <location>
        <position position="166"/>
    </location>
</feature>
<reference key="1">
    <citation type="journal article" date="1999" name="Nature">
        <title>Sequence and analysis of chromosome 4 of the plant Arabidopsis thaliana.</title>
        <authorList>
            <person name="Mayer K.F.X."/>
            <person name="Schueller C."/>
            <person name="Wambutt R."/>
            <person name="Murphy G."/>
            <person name="Volckaert G."/>
            <person name="Pohl T."/>
            <person name="Duesterhoeft A."/>
            <person name="Stiekema W."/>
            <person name="Entian K.-D."/>
            <person name="Terryn N."/>
            <person name="Harris B."/>
            <person name="Ansorge W."/>
            <person name="Brandt P."/>
            <person name="Grivell L.A."/>
            <person name="Rieger M."/>
            <person name="Weichselgartner M."/>
            <person name="de Simone V."/>
            <person name="Obermaier B."/>
            <person name="Mache R."/>
            <person name="Mueller M."/>
            <person name="Kreis M."/>
            <person name="Delseny M."/>
            <person name="Puigdomenech P."/>
            <person name="Watson M."/>
            <person name="Schmidtheini T."/>
            <person name="Reichert B."/>
            <person name="Portetelle D."/>
            <person name="Perez-Alonso M."/>
            <person name="Boutry M."/>
            <person name="Bancroft I."/>
            <person name="Vos P."/>
            <person name="Hoheisel J."/>
            <person name="Zimmermann W."/>
            <person name="Wedler H."/>
            <person name="Ridley P."/>
            <person name="Langham S.-A."/>
            <person name="McCullagh B."/>
            <person name="Bilham L."/>
            <person name="Robben J."/>
            <person name="van der Schueren J."/>
            <person name="Grymonprez B."/>
            <person name="Chuang Y.-J."/>
            <person name="Vandenbussche F."/>
            <person name="Braeken M."/>
            <person name="Weltjens I."/>
            <person name="Voet M."/>
            <person name="Bastiaens I."/>
            <person name="Aert R."/>
            <person name="Defoor E."/>
            <person name="Weitzenegger T."/>
            <person name="Bothe G."/>
            <person name="Ramsperger U."/>
            <person name="Hilbert H."/>
            <person name="Braun M."/>
            <person name="Holzer E."/>
            <person name="Brandt A."/>
            <person name="Peters S."/>
            <person name="van Staveren M."/>
            <person name="Dirkse W."/>
            <person name="Mooijman P."/>
            <person name="Klein Lankhorst R."/>
            <person name="Rose M."/>
            <person name="Hauf J."/>
            <person name="Koetter P."/>
            <person name="Berneiser S."/>
            <person name="Hempel S."/>
            <person name="Feldpausch M."/>
            <person name="Lamberth S."/>
            <person name="Van den Daele H."/>
            <person name="De Keyser A."/>
            <person name="Buysshaert C."/>
            <person name="Gielen J."/>
            <person name="Villarroel R."/>
            <person name="De Clercq R."/>
            <person name="van Montagu M."/>
            <person name="Rogers J."/>
            <person name="Cronin A."/>
            <person name="Quail M.A."/>
            <person name="Bray-Allen S."/>
            <person name="Clark L."/>
            <person name="Doggett J."/>
            <person name="Hall S."/>
            <person name="Kay M."/>
            <person name="Lennard N."/>
            <person name="McLay K."/>
            <person name="Mayes R."/>
            <person name="Pettett A."/>
            <person name="Rajandream M.A."/>
            <person name="Lyne M."/>
            <person name="Benes V."/>
            <person name="Rechmann S."/>
            <person name="Borkova D."/>
            <person name="Bloecker H."/>
            <person name="Scharfe M."/>
            <person name="Grimm M."/>
            <person name="Loehnert T.-H."/>
            <person name="Dose S."/>
            <person name="de Haan M."/>
            <person name="Maarse A.C."/>
            <person name="Schaefer M."/>
            <person name="Mueller-Auer S."/>
            <person name="Gabel C."/>
            <person name="Fuchs M."/>
            <person name="Fartmann B."/>
            <person name="Granderath K."/>
            <person name="Dauner D."/>
            <person name="Herzl A."/>
            <person name="Neumann S."/>
            <person name="Argiriou A."/>
            <person name="Vitale D."/>
            <person name="Liguori R."/>
            <person name="Piravandi E."/>
            <person name="Massenet O."/>
            <person name="Quigley F."/>
            <person name="Clabauld G."/>
            <person name="Muendlein A."/>
            <person name="Felber R."/>
            <person name="Schnabl S."/>
            <person name="Hiller R."/>
            <person name="Schmidt W."/>
            <person name="Lecharny A."/>
            <person name="Aubourg S."/>
            <person name="Chefdor F."/>
            <person name="Cooke R."/>
            <person name="Berger C."/>
            <person name="Monfort A."/>
            <person name="Casacuberta E."/>
            <person name="Gibbons T."/>
            <person name="Weber N."/>
            <person name="Vandenbol M."/>
            <person name="Bargues M."/>
            <person name="Terol J."/>
            <person name="Torres A."/>
            <person name="Perez-Perez A."/>
            <person name="Purnelle B."/>
            <person name="Bent E."/>
            <person name="Johnson S."/>
            <person name="Tacon D."/>
            <person name="Jesse T."/>
            <person name="Heijnen L."/>
            <person name="Schwarz S."/>
            <person name="Scholler P."/>
            <person name="Heber S."/>
            <person name="Francs P."/>
            <person name="Bielke C."/>
            <person name="Frishman D."/>
            <person name="Haase D."/>
            <person name="Lemcke K."/>
            <person name="Mewes H.-W."/>
            <person name="Stocker S."/>
            <person name="Zaccaria P."/>
            <person name="Bevan M."/>
            <person name="Wilson R.K."/>
            <person name="de la Bastide M."/>
            <person name="Habermann K."/>
            <person name="Parnell L."/>
            <person name="Dedhia N."/>
            <person name="Gnoj L."/>
            <person name="Schutz K."/>
            <person name="Huang E."/>
            <person name="Spiegel L."/>
            <person name="Sekhon M."/>
            <person name="Murray J."/>
            <person name="Sheet P."/>
            <person name="Cordes M."/>
            <person name="Abu-Threideh J."/>
            <person name="Stoneking T."/>
            <person name="Kalicki J."/>
            <person name="Graves T."/>
            <person name="Harmon G."/>
            <person name="Edwards J."/>
            <person name="Latreille P."/>
            <person name="Courtney L."/>
            <person name="Cloud J."/>
            <person name="Abbott A."/>
            <person name="Scott K."/>
            <person name="Johnson D."/>
            <person name="Minx P."/>
            <person name="Bentley D."/>
            <person name="Fulton B."/>
            <person name="Miller N."/>
            <person name="Greco T."/>
            <person name="Kemp K."/>
            <person name="Kramer J."/>
            <person name="Fulton L."/>
            <person name="Mardis E."/>
            <person name="Dante M."/>
            <person name="Pepin K."/>
            <person name="Hillier L.W."/>
            <person name="Nelson J."/>
            <person name="Spieth J."/>
            <person name="Ryan E."/>
            <person name="Andrews S."/>
            <person name="Geisel C."/>
            <person name="Layman D."/>
            <person name="Du H."/>
            <person name="Ali J."/>
            <person name="Berghoff A."/>
            <person name="Jones K."/>
            <person name="Drone K."/>
            <person name="Cotton M."/>
            <person name="Joshu C."/>
            <person name="Antonoiu B."/>
            <person name="Zidanic M."/>
            <person name="Strong C."/>
            <person name="Sun H."/>
            <person name="Lamar B."/>
            <person name="Yordan C."/>
            <person name="Ma P."/>
            <person name="Zhong J."/>
            <person name="Preston R."/>
            <person name="Vil D."/>
            <person name="Shekher M."/>
            <person name="Matero A."/>
            <person name="Shah R."/>
            <person name="Swaby I.K."/>
            <person name="O'Shaughnessy A."/>
            <person name="Rodriguez M."/>
            <person name="Hoffman J."/>
            <person name="Till S."/>
            <person name="Granat S."/>
            <person name="Shohdy N."/>
            <person name="Hasegawa A."/>
            <person name="Hameed A."/>
            <person name="Lodhi M."/>
            <person name="Johnson A."/>
            <person name="Chen E."/>
            <person name="Marra M.A."/>
            <person name="Martienssen R."/>
            <person name="McCombie W.R."/>
        </authorList>
    </citation>
    <scope>NUCLEOTIDE SEQUENCE [LARGE SCALE GENOMIC DNA]</scope>
    <source>
        <strain>cv. Columbia</strain>
    </source>
</reference>
<reference key="2">
    <citation type="journal article" date="2017" name="Plant J.">
        <title>Araport11: a complete reannotation of the Arabidopsis thaliana reference genome.</title>
        <authorList>
            <person name="Cheng C.Y."/>
            <person name="Krishnakumar V."/>
            <person name="Chan A.P."/>
            <person name="Thibaud-Nissen F."/>
            <person name="Schobel S."/>
            <person name="Town C.D."/>
        </authorList>
    </citation>
    <scope>GENOME REANNOTATION</scope>
    <source>
        <strain>cv. Columbia</strain>
    </source>
</reference>
<reference key="3">
    <citation type="journal article" date="2004" name="Genome Res.">
        <title>Whole genome sequence comparisons and 'full-length' cDNA sequences: a combined approach to evaluate and improve Arabidopsis genome annotation.</title>
        <authorList>
            <person name="Castelli V."/>
            <person name="Aury J.-M."/>
            <person name="Jaillon O."/>
            <person name="Wincker P."/>
            <person name="Clepet C."/>
            <person name="Menard M."/>
            <person name="Cruaud C."/>
            <person name="Quetier F."/>
            <person name="Scarpelli C."/>
            <person name="Schaechter V."/>
            <person name="Temple G."/>
            <person name="Caboche M."/>
            <person name="Weissenbach J."/>
            <person name="Salanoubat M."/>
        </authorList>
    </citation>
    <scope>NUCLEOTIDE SEQUENCE [LARGE SCALE MRNA]</scope>
    <source>
        <strain>cv. Columbia</strain>
    </source>
</reference>
<reference key="4">
    <citation type="journal article" date="2012" name="Plant J.">
        <title>The wavy growth 3 E3 ligase family controls the gravitropic response in Arabidopsis roots.</title>
        <authorList>
            <person name="Sakai T."/>
            <person name="Mochizuki S."/>
            <person name="Haga K."/>
            <person name="Uehara Y."/>
            <person name="Suzuki A."/>
            <person name="Harada A."/>
            <person name="Wada T."/>
            <person name="Ishiguro S."/>
            <person name="Okada K."/>
        </authorList>
    </citation>
    <scope>INTERACTION WITH WAV3</scope>
    <source>
        <strain>cv. Landsberg erecta</strain>
    </source>
</reference>
<reference key="5">
    <citation type="journal article" date="2014" name="New Phytol.">
        <title>The tumor necrosis factor receptor-associated factor (TRAF)-like family protein SEVEN IN ABSENTIA 2 (SINA2) promotes drought tolerance in an ABA-dependent manner in Arabidopsis.</title>
        <authorList>
            <person name="Bao Y."/>
            <person name="Wang C."/>
            <person name="Jiang C."/>
            <person name="Pan J."/>
            <person name="Zhang G."/>
            <person name="Liu H."/>
            <person name="Zhang H."/>
        </authorList>
    </citation>
    <scope>INTERACTION WITH SINAT6</scope>
    <scope>INDUCTION</scope>
</reference>
<reference key="6">
    <citation type="journal article" date="2020" name="J. Integr. Plant Biol.">
        <title>SINAT E3 ligases regulate the stability of the ESCRT component FREE1 in response to iron deficiency in plants.</title>
        <authorList>
            <person name="Xiao Z."/>
            <person name="Yang C."/>
            <person name="Liu C."/>
            <person name="Yang L."/>
            <person name="Yang S."/>
            <person name="Zhou J."/>
            <person name="Li F."/>
            <person name="Jiang L."/>
            <person name="Xiao S."/>
            <person name="Gao C."/>
            <person name="Shen W."/>
        </authorList>
    </citation>
    <scope>FUNCTION</scope>
    <scope>CATALYTIC ACTIVITY</scope>
    <scope>INTERACTION WITH FREE1</scope>
    <scope>SUBCELLULAR LOCATION</scope>
    <scope>MUTAGENESIS OF HIS-82</scope>
</reference>
<reference key="7">
    <citation type="journal article" date="2020" name="Plant Cell">
        <title>SINAT E3 ubiquitin ligases mediate FREE1 and VPS23A degradation to modulate abscisic acid signaling.</title>
        <authorList>
            <person name="Xia F.N."/>
            <person name="Zeng B."/>
            <person name="Liu H.S."/>
            <person name="Qi H."/>
            <person name="Xie L.J."/>
            <person name="Yu L.J."/>
            <person name="Chen Q.F."/>
            <person name="Li J.F."/>
            <person name="Chen Y.Q."/>
            <person name="Jiang L."/>
            <person name="Xiao S."/>
        </authorList>
    </citation>
    <scope>FUNCTION</scope>
    <scope>INTERACTION WITH FREE1 AND ELC/VPS23A</scope>
    <scope>SUBCELLULAR LOCATION</scope>
</reference>
<protein>
    <recommendedName>
        <fullName evidence="11">E3 ubiquitin-protein ligase SINAT4</fullName>
        <ecNumber evidence="9">2.3.2.27</ecNumber>
    </recommendedName>
    <alternativeName>
        <fullName evidence="11">RING-type E3 ubiquitin transferase SINAT4</fullName>
    </alternativeName>
    <alternativeName>
        <fullName evidence="11">Seven in absentia homolog 4</fullName>
    </alternativeName>
</protein>
<dbReference type="EC" id="2.3.2.27" evidence="9"/>
<dbReference type="EMBL" id="AL078579">
    <property type="protein sequence ID" value="CAB43976.1"/>
    <property type="molecule type" value="Genomic_DNA"/>
</dbReference>
<dbReference type="EMBL" id="AL161571">
    <property type="protein sequence ID" value="CAB81437.1"/>
    <property type="molecule type" value="Genomic_DNA"/>
</dbReference>
<dbReference type="EMBL" id="CP002687">
    <property type="protein sequence ID" value="AEE85404.1"/>
    <property type="molecule type" value="Genomic_DNA"/>
</dbReference>
<dbReference type="EMBL" id="BX826742">
    <property type="status" value="NOT_ANNOTATED_CDS"/>
    <property type="molecule type" value="mRNA"/>
</dbReference>
<dbReference type="PIR" id="T09027">
    <property type="entry name" value="T09027"/>
</dbReference>
<dbReference type="RefSeq" id="NP_194517.1">
    <property type="nucleotide sequence ID" value="NM_118926.3"/>
</dbReference>
<dbReference type="SMR" id="Q9STN8"/>
<dbReference type="BioGRID" id="14188">
    <property type="interactions" value="2"/>
</dbReference>
<dbReference type="FunCoup" id="Q9STN8">
    <property type="interactions" value="1042"/>
</dbReference>
<dbReference type="STRING" id="3702.Q9STN8"/>
<dbReference type="GlyGen" id="Q9STN8">
    <property type="glycosylation" value="1 site"/>
</dbReference>
<dbReference type="PaxDb" id="3702-AT4G27880.1"/>
<dbReference type="ProteomicsDB" id="232653"/>
<dbReference type="EnsemblPlants" id="AT4G27880.1">
    <property type="protein sequence ID" value="AT4G27880.1"/>
    <property type="gene ID" value="AT4G27880"/>
</dbReference>
<dbReference type="GeneID" id="828901"/>
<dbReference type="Gramene" id="AT4G27880.1">
    <property type="protein sequence ID" value="AT4G27880.1"/>
    <property type="gene ID" value="AT4G27880"/>
</dbReference>
<dbReference type="KEGG" id="ath:AT4G27880"/>
<dbReference type="Araport" id="AT4G27880"/>
<dbReference type="TAIR" id="AT4G27880">
    <property type="gene designation" value="SINAT4"/>
</dbReference>
<dbReference type="eggNOG" id="KOG3002">
    <property type="taxonomic scope" value="Eukaryota"/>
</dbReference>
<dbReference type="HOGENOM" id="CLU_028215_1_1_1"/>
<dbReference type="InParanoid" id="Q9STN8"/>
<dbReference type="OMA" id="CTYSMYP"/>
<dbReference type="OrthoDB" id="941555at2759"/>
<dbReference type="PhylomeDB" id="Q9STN8"/>
<dbReference type="UniPathway" id="UPA00143"/>
<dbReference type="PRO" id="PR:Q9STN8"/>
<dbReference type="Proteomes" id="UP000006548">
    <property type="component" value="Chromosome 4"/>
</dbReference>
<dbReference type="ExpressionAtlas" id="Q9STN8">
    <property type="expression patterns" value="baseline and differential"/>
</dbReference>
<dbReference type="GO" id="GO:0005776">
    <property type="term" value="C:autophagosome"/>
    <property type="evidence" value="ECO:0007669"/>
    <property type="project" value="UniProtKB-SubCell"/>
</dbReference>
<dbReference type="GO" id="GO:0005737">
    <property type="term" value="C:cytoplasm"/>
    <property type="evidence" value="ECO:0000353"/>
    <property type="project" value="TAIR"/>
</dbReference>
<dbReference type="GO" id="GO:0005739">
    <property type="term" value="C:mitochondrion"/>
    <property type="evidence" value="ECO:0007005"/>
    <property type="project" value="TAIR"/>
</dbReference>
<dbReference type="GO" id="GO:0005771">
    <property type="term" value="C:multivesicular body"/>
    <property type="evidence" value="ECO:0007669"/>
    <property type="project" value="UniProtKB-SubCell"/>
</dbReference>
<dbReference type="GO" id="GO:0005634">
    <property type="term" value="C:nucleus"/>
    <property type="evidence" value="ECO:0000353"/>
    <property type="project" value="TAIR"/>
</dbReference>
<dbReference type="GO" id="GO:0005886">
    <property type="term" value="C:plasma membrane"/>
    <property type="evidence" value="ECO:0000353"/>
    <property type="project" value="TAIR"/>
</dbReference>
<dbReference type="GO" id="GO:0061630">
    <property type="term" value="F:ubiquitin protein ligase activity"/>
    <property type="evidence" value="ECO:0000314"/>
    <property type="project" value="TAIR"/>
</dbReference>
<dbReference type="GO" id="GO:0008270">
    <property type="term" value="F:zinc ion binding"/>
    <property type="evidence" value="ECO:0007669"/>
    <property type="project" value="UniProtKB-KW"/>
</dbReference>
<dbReference type="GO" id="GO:0016567">
    <property type="term" value="P:protein ubiquitination"/>
    <property type="evidence" value="ECO:0000314"/>
    <property type="project" value="TAIR"/>
</dbReference>
<dbReference type="GO" id="GO:0006511">
    <property type="term" value="P:ubiquitin-dependent protein catabolic process"/>
    <property type="evidence" value="ECO:0007669"/>
    <property type="project" value="InterPro"/>
</dbReference>
<dbReference type="CDD" id="cd16571">
    <property type="entry name" value="RING-HC_SIAHs"/>
    <property type="match status" value="1"/>
</dbReference>
<dbReference type="CDD" id="cd03829">
    <property type="entry name" value="Sina"/>
    <property type="match status" value="1"/>
</dbReference>
<dbReference type="FunFam" id="3.30.40.10:FF:000041">
    <property type="entry name" value="E3 ubiquitin-protein ligase SINAT3"/>
    <property type="match status" value="1"/>
</dbReference>
<dbReference type="FunFam" id="3.30.40.10:FF:000483">
    <property type="entry name" value="E3 ubiquitin-protein ligase SINAT3"/>
    <property type="match status" value="1"/>
</dbReference>
<dbReference type="FunFam" id="2.60.210.10:FF:000004">
    <property type="entry name" value="E3 ubiquitin-protein ligase SINAT5-like"/>
    <property type="match status" value="1"/>
</dbReference>
<dbReference type="Gene3D" id="2.60.210.10">
    <property type="entry name" value="Apoptosis, Tumor Necrosis Factor Receptor Associated Protein 2, Chain A"/>
    <property type="match status" value="1"/>
</dbReference>
<dbReference type="Gene3D" id="3.30.40.10">
    <property type="entry name" value="Zinc/RING finger domain, C3HC4 (zinc finger)"/>
    <property type="match status" value="2"/>
</dbReference>
<dbReference type="InterPro" id="IPR018121">
    <property type="entry name" value="7-in-absentia-prot_TRAF-dom"/>
</dbReference>
<dbReference type="InterPro" id="IPR052088">
    <property type="entry name" value="E3_ubiquitin-ligase_SINA"/>
</dbReference>
<dbReference type="InterPro" id="IPR049548">
    <property type="entry name" value="Sina-like_RING"/>
</dbReference>
<dbReference type="InterPro" id="IPR008974">
    <property type="entry name" value="TRAF-like"/>
</dbReference>
<dbReference type="InterPro" id="IPR001841">
    <property type="entry name" value="Znf_RING"/>
</dbReference>
<dbReference type="InterPro" id="IPR013083">
    <property type="entry name" value="Znf_RING/FYVE/PHD"/>
</dbReference>
<dbReference type="InterPro" id="IPR013010">
    <property type="entry name" value="Znf_SIAH"/>
</dbReference>
<dbReference type="PANTHER" id="PTHR10315">
    <property type="entry name" value="E3 UBIQUITIN PROTEIN LIGASE SIAH"/>
    <property type="match status" value="1"/>
</dbReference>
<dbReference type="PANTHER" id="PTHR10315:SF145">
    <property type="entry name" value="E3 UBIQUITIN-PROTEIN LIGASE SINAT4"/>
    <property type="match status" value="1"/>
</dbReference>
<dbReference type="Pfam" id="PF21362">
    <property type="entry name" value="Sina_RING"/>
    <property type="match status" value="1"/>
</dbReference>
<dbReference type="Pfam" id="PF03145">
    <property type="entry name" value="Sina_TRAF"/>
    <property type="match status" value="1"/>
</dbReference>
<dbReference type="Pfam" id="PF21361">
    <property type="entry name" value="Sina_ZnF"/>
    <property type="match status" value="1"/>
</dbReference>
<dbReference type="SUPFAM" id="SSF57850">
    <property type="entry name" value="RING/U-box"/>
    <property type="match status" value="1"/>
</dbReference>
<dbReference type="SUPFAM" id="SSF49599">
    <property type="entry name" value="TRAF domain-like"/>
    <property type="match status" value="1"/>
</dbReference>
<dbReference type="PROSITE" id="PS50089">
    <property type="entry name" value="ZF_RING_2"/>
    <property type="match status" value="1"/>
</dbReference>
<dbReference type="PROSITE" id="PS51081">
    <property type="entry name" value="ZF_SIAH"/>
    <property type="match status" value="1"/>
</dbReference>
<organism>
    <name type="scientific">Arabidopsis thaliana</name>
    <name type="common">Mouse-ear cress</name>
    <dbReference type="NCBI Taxonomy" id="3702"/>
    <lineage>
        <taxon>Eukaryota</taxon>
        <taxon>Viridiplantae</taxon>
        <taxon>Streptophyta</taxon>
        <taxon>Embryophyta</taxon>
        <taxon>Tracheophyta</taxon>
        <taxon>Spermatophyta</taxon>
        <taxon>Magnoliopsida</taxon>
        <taxon>eudicotyledons</taxon>
        <taxon>Gunneridae</taxon>
        <taxon>Pentapetalae</taxon>
        <taxon>rosids</taxon>
        <taxon>malvids</taxon>
        <taxon>Brassicales</taxon>
        <taxon>Brassicaceae</taxon>
        <taxon>Camelineae</taxon>
        <taxon>Arabidopsis</taxon>
    </lineage>
</organism>
<accession>Q9STN8</accession>
<name>SINA4_ARATH</name>
<evidence type="ECO:0000250" key="1"/>
<evidence type="ECO:0000250" key="2">
    <source>
        <dbReference type="UniProtKB" id="Q8IUQ4"/>
    </source>
</evidence>
<evidence type="ECO:0000255" key="3">
    <source>
        <dbReference type="PROSITE-ProRule" id="PRU00175"/>
    </source>
</evidence>
<evidence type="ECO:0000255" key="4">
    <source>
        <dbReference type="PROSITE-ProRule" id="PRU00455"/>
    </source>
</evidence>
<evidence type="ECO:0000256" key="5">
    <source>
        <dbReference type="SAM" id="MobiDB-lite"/>
    </source>
</evidence>
<evidence type="ECO:0000269" key="6">
    <source>
    </source>
</evidence>
<evidence type="ECO:0000269" key="7">
    <source>
    </source>
</evidence>
<evidence type="ECO:0000269" key="8">
    <source>
    </source>
</evidence>
<evidence type="ECO:0000269" key="9">
    <source>
    </source>
</evidence>
<evidence type="ECO:0000303" key="10">
    <source>
    </source>
</evidence>
<evidence type="ECO:0000305" key="11"/>
<proteinExistence type="evidence at protein level"/>